<dbReference type="EMBL" id="AB003094">
    <property type="protein sequence ID" value="BAA24819.1"/>
    <property type="molecule type" value="mRNA"/>
</dbReference>
<dbReference type="EMBL" id="AY528246">
    <property type="protein sequence ID" value="AAS20594.1"/>
    <property type="molecule type" value="mRNA"/>
</dbReference>
<dbReference type="EMBL" id="BC103021">
    <property type="protein sequence ID" value="AAI03022.1"/>
    <property type="molecule type" value="mRNA"/>
</dbReference>
<dbReference type="RefSeq" id="NP_777217.1">
    <property type="nucleotide sequence ID" value="NM_174792.4"/>
</dbReference>
<dbReference type="RefSeq" id="XP_003583967.2">
    <property type="nucleotide sequence ID" value="XM_003583919.4"/>
</dbReference>
<dbReference type="SMR" id="O46415"/>
<dbReference type="FunCoup" id="O46415">
    <property type="interactions" value="149"/>
</dbReference>
<dbReference type="STRING" id="9913.ENSBTAP00000009965"/>
<dbReference type="PaxDb" id="9913-ENSBTAP00000009965"/>
<dbReference type="PeptideAtlas" id="O46415"/>
<dbReference type="Ensembl" id="ENSBTAT00000065672.3">
    <property type="protein sequence ID" value="ENSBTAP00000072850.2"/>
    <property type="gene ID" value="ENSBTAG00000038430.4"/>
</dbReference>
<dbReference type="GeneID" id="286861"/>
<dbReference type="KEGG" id="bta:286861"/>
<dbReference type="KEGG" id="bta:788801"/>
<dbReference type="CTD" id="2512"/>
<dbReference type="VEuPathDB" id="HostDB:ENSBTAG00000013343"/>
<dbReference type="eggNOG" id="KOG2332">
    <property type="taxonomic scope" value="Eukaryota"/>
</dbReference>
<dbReference type="GeneTree" id="ENSGT00940000153096"/>
<dbReference type="HOGENOM" id="CLU_065681_4_0_1"/>
<dbReference type="InParanoid" id="O46415"/>
<dbReference type="OMA" id="CARADPH"/>
<dbReference type="OrthoDB" id="265795at2759"/>
<dbReference type="TreeFam" id="TF313885"/>
<dbReference type="Reactome" id="R-BTA-6798695">
    <property type="pathway name" value="Neutrophil degranulation"/>
</dbReference>
<dbReference type="Reactome" id="R-BTA-917937">
    <property type="pathway name" value="Iron uptake and transport"/>
</dbReference>
<dbReference type="Proteomes" id="UP000009136">
    <property type="component" value="Chromosome 23"/>
</dbReference>
<dbReference type="Bgee" id="ENSBTAG00000013343">
    <property type="expression patterns" value="Expressed in metanephros cortex and 105 other cell types or tissues"/>
</dbReference>
<dbReference type="GO" id="GO:0044754">
    <property type="term" value="C:autolysosome"/>
    <property type="evidence" value="ECO:0007669"/>
    <property type="project" value="UniProtKB-SubCell"/>
</dbReference>
<dbReference type="GO" id="GO:0005776">
    <property type="term" value="C:autophagosome"/>
    <property type="evidence" value="ECO:0007669"/>
    <property type="project" value="UniProtKB-SubCell"/>
</dbReference>
<dbReference type="GO" id="GO:0005737">
    <property type="term" value="C:cytoplasm"/>
    <property type="evidence" value="ECO:0000318"/>
    <property type="project" value="GO_Central"/>
</dbReference>
<dbReference type="GO" id="GO:0031410">
    <property type="term" value="C:cytoplasmic vesicle"/>
    <property type="evidence" value="ECO:0007669"/>
    <property type="project" value="UniProtKB-KW"/>
</dbReference>
<dbReference type="GO" id="GO:0070288">
    <property type="term" value="C:ferritin complex"/>
    <property type="evidence" value="ECO:0000250"/>
    <property type="project" value="UniProtKB"/>
</dbReference>
<dbReference type="GO" id="GO:0008199">
    <property type="term" value="F:ferric iron binding"/>
    <property type="evidence" value="ECO:0000318"/>
    <property type="project" value="GO_Central"/>
</dbReference>
<dbReference type="GO" id="GO:0008198">
    <property type="term" value="F:ferrous iron binding"/>
    <property type="evidence" value="ECO:0000318"/>
    <property type="project" value="GO_Central"/>
</dbReference>
<dbReference type="GO" id="GO:0005506">
    <property type="term" value="F:iron ion binding"/>
    <property type="evidence" value="ECO:0000250"/>
    <property type="project" value="UniProtKB"/>
</dbReference>
<dbReference type="GO" id="GO:0006879">
    <property type="term" value="P:intracellular iron ion homeostasis"/>
    <property type="evidence" value="ECO:0007669"/>
    <property type="project" value="UniProtKB-KW"/>
</dbReference>
<dbReference type="GO" id="GO:0006826">
    <property type="term" value="P:iron ion transport"/>
    <property type="evidence" value="ECO:0007669"/>
    <property type="project" value="InterPro"/>
</dbReference>
<dbReference type="CDD" id="cd00904">
    <property type="entry name" value="Ferritin"/>
    <property type="match status" value="1"/>
</dbReference>
<dbReference type="FunFam" id="1.20.1260.10:FF:000009">
    <property type="entry name" value="Ferritin light chain"/>
    <property type="match status" value="1"/>
</dbReference>
<dbReference type="Gene3D" id="1.20.1260.10">
    <property type="match status" value="1"/>
</dbReference>
<dbReference type="InterPro" id="IPR001519">
    <property type="entry name" value="Ferritin"/>
</dbReference>
<dbReference type="InterPro" id="IPR012347">
    <property type="entry name" value="Ferritin-like"/>
</dbReference>
<dbReference type="InterPro" id="IPR009040">
    <property type="entry name" value="Ferritin-like_diiron"/>
</dbReference>
<dbReference type="InterPro" id="IPR009078">
    <property type="entry name" value="Ferritin-like_SF"/>
</dbReference>
<dbReference type="InterPro" id="IPR014034">
    <property type="entry name" value="Ferritin_CS"/>
</dbReference>
<dbReference type="InterPro" id="IPR008331">
    <property type="entry name" value="Ferritin_DPS_dom"/>
</dbReference>
<dbReference type="PANTHER" id="PTHR11431">
    <property type="entry name" value="FERRITIN"/>
    <property type="match status" value="1"/>
</dbReference>
<dbReference type="PANTHER" id="PTHR11431:SF47">
    <property type="entry name" value="FERRITIN LIGHT CHAIN"/>
    <property type="match status" value="1"/>
</dbReference>
<dbReference type="Pfam" id="PF00210">
    <property type="entry name" value="Ferritin"/>
    <property type="match status" value="1"/>
</dbReference>
<dbReference type="SUPFAM" id="SSF47240">
    <property type="entry name" value="Ferritin-like"/>
    <property type="match status" value="1"/>
</dbReference>
<dbReference type="PROSITE" id="PS00540">
    <property type="entry name" value="FERRITIN_1"/>
    <property type="match status" value="1"/>
</dbReference>
<dbReference type="PROSITE" id="PS00204">
    <property type="entry name" value="FERRITIN_2"/>
    <property type="match status" value="1"/>
</dbReference>
<dbReference type="PROSITE" id="PS50905">
    <property type="entry name" value="FERRITIN_LIKE"/>
    <property type="match status" value="1"/>
</dbReference>
<evidence type="ECO:0000250" key="1"/>
<evidence type="ECO:0000250" key="2">
    <source>
        <dbReference type="UniProtKB" id="P02791"/>
    </source>
</evidence>
<evidence type="ECO:0000250" key="3">
    <source>
        <dbReference type="UniProtKB" id="P02792"/>
    </source>
</evidence>
<evidence type="ECO:0000250" key="4">
    <source>
        <dbReference type="UniProtKB" id="P29391"/>
    </source>
</evidence>
<evidence type="ECO:0000255" key="5">
    <source>
        <dbReference type="PROSITE-ProRule" id="PRU00085"/>
    </source>
</evidence>
<evidence type="ECO:0000305" key="6"/>
<sequence length="175" mass="19988">MSSQIRQNYSTEVEAAVNRLVNMQLRASYTYLSLGFYFDRDDVALEGVGHFFRELAKEKREGAERLLKLQNQRGGRALFLDVQKPSQDEWGKTQDAMEAALLVEKNLNQALLDLHGLASARGDPHICDFLENHFLDEEVKLIKKMGDHLTNLRRLAGPQAGLGEYLFERLTLKHD</sequence>
<proteinExistence type="evidence at transcript level"/>
<keyword id="KW-0007">Acetylation</keyword>
<keyword id="KW-0963">Cytoplasm</keyword>
<keyword id="KW-0968">Cytoplasmic vesicle</keyword>
<keyword id="KW-0408">Iron</keyword>
<keyword id="KW-0409">Iron storage</keyword>
<keyword id="KW-0458">Lysosome</keyword>
<keyword id="KW-0479">Metal-binding</keyword>
<keyword id="KW-1185">Reference proteome</keyword>
<feature type="initiator methionine" description="Removed" evidence="2">
    <location>
        <position position="1"/>
    </location>
</feature>
<feature type="chain" id="PRO_0000201058" description="Ferritin light chain">
    <location>
        <begin position="2"/>
        <end position="175"/>
    </location>
</feature>
<feature type="domain" description="Ferritin-like diiron" evidence="5">
    <location>
        <begin position="7"/>
        <end position="156"/>
    </location>
</feature>
<feature type="binding site" evidence="5">
    <location>
        <position position="54"/>
    </location>
    <ligand>
        <name>Fe cation</name>
        <dbReference type="ChEBI" id="CHEBI:24875"/>
    </ligand>
</feature>
<feature type="binding site" evidence="5">
    <location>
        <position position="58"/>
    </location>
    <ligand>
        <name>Fe cation</name>
        <dbReference type="ChEBI" id="CHEBI:24875"/>
    </ligand>
</feature>
<feature type="binding site" evidence="5">
    <location>
        <position position="61"/>
    </location>
    <ligand>
        <name>Fe cation</name>
        <dbReference type="ChEBI" id="CHEBI:24875"/>
    </ligand>
</feature>
<feature type="binding site" evidence="5">
    <location>
        <position position="64"/>
    </location>
    <ligand>
        <name>Fe cation</name>
        <dbReference type="ChEBI" id="CHEBI:24875"/>
    </ligand>
</feature>
<feature type="modified residue" description="N-acetylserine" evidence="2">
    <location>
        <position position="2"/>
    </location>
</feature>
<reference key="1">
    <citation type="journal article" date="1997" name="Comp. Biochem. Physiol.">
        <title>Sequencing of cDNA clones that encode bovine ferritin H and L chains.</title>
        <authorList>
            <person name="Orino K."/>
            <person name="Eguchi K."/>
            <person name="Nakayama T."/>
            <person name="Yamamoto S."/>
            <person name="Watanabe K."/>
        </authorList>
    </citation>
    <scope>NUCLEOTIDE SEQUENCE [MRNA]</scope>
    <source>
        <tissue>Spleen</tissue>
    </source>
</reference>
<reference key="2">
    <citation type="submission" date="2004-01" db="EMBL/GenBank/DDBJ databases">
        <title>Analysis of gene expression in the bovine blastocyst or hatched blastocyst in vitro using ACP method.</title>
        <authorList>
            <person name="Shin M.L."/>
            <person name="Cui X.S."/>
            <person name="Park S.Y."/>
            <person name="Kim E.Y."/>
            <person name="Park S.P."/>
            <person name="Lee W.J."/>
            <person name="Hwang K.C."/>
            <person name="Kim N.H."/>
        </authorList>
    </citation>
    <scope>NUCLEOTIDE SEQUENCE [MRNA]</scope>
</reference>
<reference key="3">
    <citation type="submission" date="2005-08" db="EMBL/GenBank/DDBJ databases">
        <authorList>
            <consortium name="NIH - Mammalian Gene Collection (MGC) project"/>
        </authorList>
    </citation>
    <scope>NUCLEOTIDE SEQUENCE [LARGE SCALE MRNA]</scope>
    <source>
        <strain>Crossbred X Angus</strain>
        <tissue>Ileum</tissue>
    </source>
</reference>
<organism>
    <name type="scientific">Bos taurus</name>
    <name type="common">Bovine</name>
    <dbReference type="NCBI Taxonomy" id="9913"/>
    <lineage>
        <taxon>Eukaryota</taxon>
        <taxon>Metazoa</taxon>
        <taxon>Chordata</taxon>
        <taxon>Craniata</taxon>
        <taxon>Vertebrata</taxon>
        <taxon>Euteleostomi</taxon>
        <taxon>Mammalia</taxon>
        <taxon>Eutheria</taxon>
        <taxon>Laurasiatheria</taxon>
        <taxon>Artiodactyla</taxon>
        <taxon>Ruminantia</taxon>
        <taxon>Pecora</taxon>
        <taxon>Bovidae</taxon>
        <taxon>Bovinae</taxon>
        <taxon>Bos</taxon>
    </lineage>
</organism>
<name>FRIL_BOVIN</name>
<gene>
    <name type="primary">FTL</name>
</gene>
<comment type="function">
    <text evidence="1 3">Stores iron in a soluble, non-toxic, readily available form. Important for iron homeostasis. Iron is taken up in the ferrous form and deposited as ferric hydroxides after oxidation. Also plays a role in delivery of iron to cells. Mediates iron uptake in capsule cells of the developing kidney (By similarity). Delivery to lysosomes by the cargo receptor NCOA4 for autophagic degradation and release or iron (By similarity).</text>
</comment>
<comment type="subunit">
    <text evidence="3">Oligomer of 24 subunits. There are two types of subunits: L (light) chain and H (heavy) chain. The major chain can be light or heavy, depending on the species and tissue type. The functional molecule forms a roughly spherical shell with a diameter of 12 nm and contains a central cavity into which the insoluble mineral iron core is deposited. Interacts with NCOA4 (By similarity).</text>
</comment>
<comment type="subcellular location">
    <subcellularLocation>
        <location evidence="4">Cytoplasmic vesicle</location>
        <location evidence="4">Autophagosome</location>
    </subcellularLocation>
    <subcellularLocation>
        <location evidence="4">Cytoplasm</location>
    </subcellularLocation>
    <subcellularLocation>
        <location evidence="4">Autolysosome</location>
    </subcellularLocation>
</comment>
<comment type="similarity">
    <text evidence="6">Belongs to the ferritin family.</text>
</comment>
<comment type="caution">
    <text evidence="6">Lys-57 is present instead of the conserved Glu which is expected to bind iron.</text>
</comment>
<accession>O46415</accession>
<accession>Q3ZBZ3</accession>
<accession>Q53YP3</accession>
<protein>
    <recommendedName>
        <fullName>Ferritin light chain</fullName>
        <shortName>Ferritin L subunit</shortName>
    </recommendedName>
</protein>